<gene>
    <name evidence="1" type="primary">mnmG</name>
    <name evidence="1" type="synonym">gidA</name>
    <name type="ordered locus">CF0883</name>
</gene>
<evidence type="ECO:0000255" key="1">
    <source>
        <dbReference type="HAMAP-Rule" id="MF_00129"/>
    </source>
</evidence>
<keyword id="KW-0963">Cytoplasm</keyword>
<keyword id="KW-0274">FAD</keyword>
<keyword id="KW-0285">Flavoprotein</keyword>
<keyword id="KW-0520">NAD</keyword>
<keyword id="KW-0819">tRNA processing</keyword>
<name>MNMG_CHLFF</name>
<proteinExistence type="inferred from homology"/>
<protein>
    <recommendedName>
        <fullName evidence="1">tRNA uridine 5-carboxymethylaminomethyl modification enzyme MnmG</fullName>
    </recommendedName>
    <alternativeName>
        <fullName evidence="1">Glucose-inhibited division protein A</fullName>
    </alternativeName>
</protein>
<accession>Q252Y3</accession>
<dbReference type="EMBL" id="AP006861">
    <property type="protein sequence ID" value="BAE81655.1"/>
    <property type="molecule type" value="Genomic_DNA"/>
</dbReference>
<dbReference type="RefSeq" id="WP_011458430.1">
    <property type="nucleotide sequence ID" value="NC_007899.1"/>
</dbReference>
<dbReference type="SMR" id="Q252Y3"/>
<dbReference type="STRING" id="264202.CF0883"/>
<dbReference type="KEGG" id="cfe:CF0883"/>
<dbReference type="eggNOG" id="COG0445">
    <property type="taxonomic scope" value="Bacteria"/>
</dbReference>
<dbReference type="HOGENOM" id="CLU_007831_2_2_0"/>
<dbReference type="OrthoDB" id="9815560at2"/>
<dbReference type="Proteomes" id="UP000001260">
    <property type="component" value="Chromosome"/>
</dbReference>
<dbReference type="GO" id="GO:0005829">
    <property type="term" value="C:cytosol"/>
    <property type="evidence" value="ECO:0007669"/>
    <property type="project" value="TreeGrafter"/>
</dbReference>
<dbReference type="GO" id="GO:0050660">
    <property type="term" value="F:flavin adenine dinucleotide binding"/>
    <property type="evidence" value="ECO:0007669"/>
    <property type="project" value="UniProtKB-UniRule"/>
</dbReference>
<dbReference type="GO" id="GO:0030488">
    <property type="term" value="P:tRNA methylation"/>
    <property type="evidence" value="ECO:0007669"/>
    <property type="project" value="TreeGrafter"/>
</dbReference>
<dbReference type="GO" id="GO:0002098">
    <property type="term" value="P:tRNA wobble uridine modification"/>
    <property type="evidence" value="ECO:0007669"/>
    <property type="project" value="InterPro"/>
</dbReference>
<dbReference type="FunFam" id="1.10.150.570:FF:000001">
    <property type="entry name" value="tRNA uridine 5-carboxymethylaminomethyl modification enzyme MnmG"/>
    <property type="match status" value="1"/>
</dbReference>
<dbReference type="FunFam" id="3.50.50.60:FF:000002">
    <property type="entry name" value="tRNA uridine 5-carboxymethylaminomethyl modification enzyme MnmG"/>
    <property type="match status" value="1"/>
</dbReference>
<dbReference type="FunFam" id="3.50.50.60:FF:000010">
    <property type="entry name" value="tRNA uridine 5-carboxymethylaminomethyl modification enzyme MnmG"/>
    <property type="match status" value="1"/>
</dbReference>
<dbReference type="Gene3D" id="3.50.50.60">
    <property type="entry name" value="FAD/NAD(P)-binding domain"/>
    <property type="match status" value="2"/>
</dbReference>
<dbReference type="Gene3D" id="1.10.150.570">
    <property type="entry name" value="GidA associated domain, C-terminal subdomain"/>
    <property type="match status" value="1"/>
</dbReference>
<dbReference type="Gene3D" id="1.10.10.1800">
    <property type="entry name" value="tRNA uridine 5-carboxymethylaminomethyl modification enzyme MnmG/GidA"/>
    <property type="match status" value="1"/>
</dbReference>
<dbReference type="HAMAP" id="MF_00129">
    <property type="entry name" value="MnmG_GidA"/>
    <property type="match status" value="1"/>
</dbReference>
<dbReference type="InterPro" id="IPR036188">
    <property type="entry name" value="FAD/NAD-bd_sf"/>
</dbReference>
<dbReference type="InterPro" id="IPR049312">
    <property type="entry name" value="GIDA_C_N"/>
</dbReference>
<dbReference type="InterPro" id="IPR004416">
    <property type="entry name" value="MnmG"/>
</dbReference>
<dbReference type="InterPro" id="IPR002218">
    <property type="entry name" value="MnmG-rel"/>
</dbReference>
<dbReference type="InterPro" id="IPR020595">
    <property type="entry name" value="MnmG-rel_CS"/>
</dbReference>
<dbReference type="InterPro" id="IPR026904">
    <property type="entry name" value="MnmG_C"/>
</dbReference>
<dbReference type="InterPro" id="IPR047001">
    <property type="entry name" value="MnmG_C_subdom"/>
</dbReference>
<dbReference type="InterPro" id="IPR044920">
    <property type="entry name" value="MnmG_C_subdom_sf"/>
</dbReference>
<dbReference type="InterPro" id="IPR040131">
    <property type="entry name" value="MnmG_N"/>
</dbReference>
<dbReference type="NCBIfam" id="TIGR00136">
    <property type="entry name" value="mnmG_gidA"/>
    <property type="match status" value="1"/>
</dbReference>
<dbReference type="PANTHER" id="PTHR11806">
    <property type="entry name" value="GLUCOSE INHIBITED DIVISION PROTEIN A"/>
    <property type="match status" value="1"/>
</dbReference>
<dbReference type="PANTHER" id="PTHR11806:SF0">
    <property type="entry name" value="PROTEIN MTO1 HOMOLOG, MITOCHONDRIAL"/>
    <property type="match status" value="1"/>
</dbReference>
<dbReference type="Pfam" id="PF01134">
    <property type="entry name" value="GIDA"/>
    <property type="match status" value="1"/>
</dbReference>
<dbReference type="Pfam" id="PF21680">
    <property type="entry name" value="GIDA_C_1st"/>
    <property type="match status" value="1"/>
</dbReference>
<dbReference type="Pfam" id="PF13932">
    <property type="entry name" value="SAM_GIDA_C"/>
    <property type="match status" value="1"/>
</dbReference>
<dbReference type="PRINTS" id="PR00368">
    <property type="entry name" value="FADPNR"/>
</dbReference>
<dbReference type="SMART" id="SM01228">
    <property type="entry name" value="GIDA_assoc_3"/>
    <property type="match status" value="1"/>
</dbReference>
<dbReference type="SUPFAM" id="SSF51905">
    <property type="entry name" value="FAD/NAD(P)-binding domain"/>
    <property type="match status" value="1"/>
</dbReference>
<dbReference type="PROSITE" id="PS01280">
    <property type="entry name" value="GIDA_1"/>
    <property type="match status" value="1"/>
</dbReference>
<dbReference type="PROSITE" id="PS01281">
    <property type="entry name" value="GIDA_2"/>
    <property type="match status" value="1"/>
</dbReference>
<organism>
    <name type="scientific">Chlamydia felis (strain Fe/C-56)</name>
    <name type="common">Chlamydophila felis</name>
    <dbReference type="NCBI Taxonomy" id="264202"/>
    <lineage>
        <taxon>Bacteria</taxon>
        <taxon>Pseudomonadati</taxon>
        <taxon>Chlamydiota</taxon>
        <taxon>Chlamydiia</taxon>
        <taxon>Chlamydiales</taxon>
        <taxon>Chlamydiaceae</taxon>
        <taxon>Chlamydia/Chlamydophila group</taxon>
        <taxon>Chlamydia</taxon>
    </lineage>
</organism>
<sequence>MWTHPISYDVIVVGAGHAGCEAAFCSAKMGASVLILTSNLDTIAKLSCNPAVGGIGKGHIVREIDALGGIMAEITDRSGIQFRILNQTKGPAVRAPRAQVDKQMYHIHMKRLLESTPGLHIMQGTVESLLDKENVIQGVTTKEGIAYLGKTVILSSGTFMRGLIHIGDRSFSGGRLGDPAATGLSAALKERGFPISRLKTGTPPRLLASSIDFSVTEEQPGDPGVGFVHRDEPFVPPLPQVSCYITHTTEKTKEIITANIRRSALYGGRIEGIGPRYCPSIEDKIVKFADKERHHIFIEPEGIYTQEVYVNGLSTSMPFDVQYEMIRSVRGLENAIITRPAYAIEYDYVHGNVIYPTLESKTIEGLFLCGQINGTTGYEEAAAQGLIAGINAVNKVLRKPDFIPSRQESYIGVMLDDLTTQVLDEPYRMFTGRAEHRLLLRQDNACLRLSHYGRDLGLLSKERYELFEHQKQIIEEEKLRLSKTFKKYGNSVVSLAKALCRPEVSYDTLREVFPEEVRDFGSILNASLEMEIKYAGYIERQKSLIHSLSKSENMTIPEDIDYQSISSLSLEAREKLAKFTPRTIGSASRISGIANADIQVLMVAVKKHAHK</sequence>
<comment type="function">
    <text evidence="1">NAD-binding protein involved in the addition of a carboxymethylaminomethyl (cmnm) group at the wobble position (U34) of certain tRNAs, forming tRNA-cmnm(5)s(2)U34.</text>
</comment>
<comment type="cofactor">
    <cofactor evidence="1">
        <name>FAD</name>
        <dbReference type="ChEBI" id="CHEBI:57692"/>
    </cofactor>
</comment>
<comment type="subunit">
    <text evidence="1">Homodimer. Heterotetramer of two MnmE and two MnmG subunits.</text>
</comment>
<comment type="subcellular location">
    <subcellularLocation>
        <location evidence="1">Cytoplasm</location>
    </subcellularLocation>
</comment>
<comment type="similarity">
    <text evidence="1">Belongs to the MnmG family.</text>
</comment>
<reference key="1">
    <citation type="journal article" date="2006" name="DNA Res.">
        <title>Genome sequence of the cat pathogen, Chlamydophila felis.</title>
        <authorList>
            <person name="Azuma Y."/>
            <person name="Hirakawa H."/>
            <person name="Yamashita A."/>
            <person name="Cai Y."/>
            <person name="Rahman M.A."/>
            <person name="Suzuki H."/>
            <person name="Mitaku S."/>
            <person name="Toh H."/>
            <person name="Goto S."/>
            <person name="Murakami T."/>
            <person name="Sugi K."/>
            <person name="Hayashi H."/>
            <person name="Fukushi H."/>
            <person name="Hattori M."/>
            <person name="Kuhara S."/>
            <person name="Shirai M."/>
        </authorList>
    </citation>
    <scope>NUCLEOTIDE SEQUENCE [LARGE SCALE GENOMIC DNA]</scope>
    <source>
        <strain>Fe/C-56</strain>
    </source>
</reference>
<feature type="chain" id="PRO_1000016577" description="tRNA uridine 5-carboxymethylaminomethyl modification enzyme MnmG">
    <location>
        <begin position="1"/>
        <end position="611"/>
    </location>
</feature>
<feature type="binding site" evidence="1">
    <location>
        <begin position="14"/>
        <end position="19"/>
    </location>
    <ligand>
        <name>FAD</name>
        <dbReference type="ChEBI" id="CHEBI:57692"/>
    </ligand>
</feature>
<feature type="binding site" evidence="1">
    <location>
        <begin position="274"/>
        <end position="288"/>
    </location>
    <ligand>
        <name>NAD(+)</name>
        <dbReference type="ChEBI" id="CHEBI:57540"/>
    </ligand>
</feature>